<organism>
    <name type="scientific">Methylocella silvestris (strain DSM 15510 / CIP 108128 / LMG 27833 / NCIMB 13906 / BL2)</name>
    <dbReference type="NCBI Taxonomy" id="395965"/>
    <lineage>
        <taxon>Bacteria</taxon>
        <taxon>Pseudomonadati</taxon>
        <taxon>Pseudomonadota</taxon>
        <taxon>Alphaproteobacteria</taxon>
        <taxon>Hyphomicrobiales</taxon>
        <taxon>Beijerinckiaceae</taxon>
        <taxon>Methylocella</taxon>
    </lineage>
</organism>
<proteinExistence type="inferred from homology"/>
<gene>
    <name evidence="1" type="primary">hfq</name>
    <name type="ordered locus">Msil_0535</name>
</gene>
<reference key="1">
    <citation type="journal article" date="2010" name="J. Bacteriol.">
        <title>Complete genome sequence of the aerobic facultative methanotroph Methylocella silvestris BL2.</title>
        <authorList>
            <person name="Chen Y."/>
            <person name="Crombie A."/>
            <person name="Rahman M.T."/>
            <person name="Dedysh S.N."/>
            <person name="Liesack W."/>
            <person name="Stott M.B."/>
            <person name="Alam M."/>
            <person name="Theisen A.R."/>
            <person name="Murrell J.C."/>
            <person name="Dunfield P.F."/>
        </authorList>
    </citation>
    <scope>NUCLEOTIDE SEQUENCE [LARGE SCALE GENOMIC DNA]</scope>
    <source>
        <strain>DSM 15510 / CIP 108128 / LMG 27833 / NCIMB 13906 / BL2</strain>
    </source>
</reference>
<name>HFQ_METSB</name>
<feature type="chain" id="PRO_1000135038" description="RNA-binding protein Hfq">
    <location>
        <begin position="1"/>
        <end position="83"/>
    </location>
</feature>
<feature type="domain" description="Sm" evidence="2">
    <location>
        <begin position="11"/>
        <end position="71"/>
    </location>
</feature>
<dbReference type="EMBL" id="CP001280">
    <property type="protein sequence ID" value="ACK49507.1"/>
    <property type="molecule type" value="Genomic_DNA"/>
</dbReference>
<dbReference type="RefSeq" id="WP_012589577.1">
    <property type="nucleotide sequence ID" value="NC_011666.1"/>
</dbReference>
<dbReference type="SMR" id="B8ELB8"/>
<dbReference type="STRING" id="395965.Msil_0535"/>
<dbReference type="KEGG" id="msl:Msil_0535"/>
<dbReference type="eggNOG" id="COG1923">
    <property type="taxonomic scope" value="Bacteria"/>
</dbReference>
<dbReference type="HOGENOM" id="CLU_113688_0_0_5"/>
<dbReference type="OrthoDB" id="9799751at2"/>
<dbReference type="Proteomes" id="UP000002257">
    <property type="component" value="Chromosome"/>
</dbReference>
<dbReference type="GO" id="GO:0005829">
    <property type="term" value="C:cytosol"/>
    <property type="evidence" value="ECO:0007669"/>
    <property type="project" value="TreeGrafter"/>
</dbReference>
<dbReference type="GO" id="GO:0003723">
    <property type="term" value="F:RNA binding"/>
    <property type="evidence" value="ECO:0007669"/>
    <property type="project" value="UniProtKB-UniRule"/>
</dbReference>
<dbReference type="GO" id="GO:0006355">
    <property type="term" value="P:regulation of DNA-templated transcription"/>
    <property type="evidence" value="ECO:0007669"/>
    <property type="project" value="InterPro"/>
</dbReference>
<dbReference type="GO" id="GO:0043487">
    <property type="term" value="P:regulation of RNA stability"/>
    <property type="evidence" value="ECO:0007669"/>
    <property type="project" value="TreeGrafter"/>
</dbReference>
<dbReference type="GO" id="GO:0045974">
    <property type="term" value="P:regulation of translation, ncRNA-mediated"/>
    <property type="evidence" value="ECO:0007669"/>
    <property type="project" value="TreeGrafter"/>
</dbReference>
<dbReference type="CDD" id="cd01716">
    <property type="entry name" value="Hfq"/>
    <property type="match status" value="1"/>
</dbReference>
<dbReference type="FunFam" id="2.30.30.100:FF:000001">
    <property type="entry name" value="RNA-binding protein Hfq"/>
    <property type="match status" value="1"/>
</dbReference>
<dbReference type="Gene3D" id="2.30.30.100">
    <property type="match status" value="1"/>
</dbReference>
<dbReference type="HAMAP" id="MF_00436">
    <property type="entry name" value="Hfq"/>
    <property type="match status" value="1"/>
</dbReference>
<dbReference type="InterPro" id="IPR005001">
    <property type="entry name" value="Hfq"/>
</dbReference>
<dbReference type="InterPro" id="IPR010920">
    <property type="entry name" value="LSM_dom_sf"/>
</dbReference>
<dbReference type="InterPro" id="IPR047575">
    <property type="entry name" value="Sm"/>
</dbReference>
<dbReference type="NCBIfam" id="TIGR02383">
    <property type="entry name" value="Hfq"/>
    <property type="match status" value="1"/>
</dbReference>
<dbReference type="NCBIfam" id="NF001602">
    <property type="entry name" value="PRK00395.1"/>
    <property type="match status" value="1"/>
</dbReference>
<dbReference type="PANTHER" id="PTHR34772">
    <property type="entry name" value="RNA-BINDING PROTEIN HFQ"/>
    <property type="match status" value="1"/>
</dbReference>
<dbReference type="PANTHER" id="PTHR34772:SF1">
    <property type="entry name" value="RNA-BINDING PROTEIN HFQ"/>
    <property type="match status" value="1"/>
</dbReference>
<dbReference type="Pfam" id="PF17209">
    <property type="entry name" value="Hfq"/>
    <property type="match status" value="1"/>
</dbReference>
<dbReference type="SUPFAM" id="SSF50182">
    <property type="entry name" value="Sm-like ribonucleoproteins"/>
    <property type="match status" value="1"/>
</dbReference>
<dbReference type="PROSITE" id="PS52002">
    <property type="entry name" value="SM"/>
    <property type="match status" value="1"/>
</dbReference>
<keyword id="KW-1185">Reference proteome</keyword>
<keyword id="KW-0694">RNA-binding</keyword>
<keyword id="KW-0346">Stress response</keyword>
<comment type="function">
    <text evidence="1">RNA chaperone that binds small regulatory RNA (sRNAs) and mRNAs to facilitate mRNA translational regulation in response to envelope stress, environmental stress and changes in metabolite concentrations. Also binds with high specificity to tRNAs.</text>
</comment>
<comment type="subunit">
    <text evidence="1">Homohexamer.</text>
</comment>
<comment type="similarity">
    <text evidence="1">Belongs to the Hfq family.</text>
</comment>
<evidence type="ECO:0000255" key="1">
    <source>
        <dbReference type="HAMAP-Rule" id="MF_00436"/>
    </source>
</evidence>
<evidence type="ECO:0000255" key="2">
    <source>
        <dbReference type="PROSITE-ProRule" id="PRU01346"/>
    </source>
</evidence>
<protein>
    <recommendedName>
        <fullName evidence="1">RNA-binding protein Hfq</fullName>
    </recommendedName>
</protein>
<accession>B8ELB8</accession>
<sequence length="83" mass="9350">MAAERPQNLQDTFLNFVRKNKVPLTIFLVNGVKLQGVVTWFDNFCVLLRRDGHSQLVYKHAISTIMPGQPIQMFESGEDAAAS</sequence>